<protein>
    <recommendedName>
        <fullName>Uncharacterized protein 2</fullName>
    </recommendedName>
</protein>
<reference key="1">
    <citation type="journal article" date="2003" name="J. Gen. Virol.">
        <title>Characterization of Cestrum yellow leaf curling virus: a new member of the family Caulimoviridae.</title>
        <authorList>
            <person name="Stavolone L."/>
            <person name="Ragozzino A."/>
            <person name="Hohn T."/>
        </authorList>
    </citation>
    <scope>NUCLEOTIDE SEQUENCE [GENOMIC DNA]</scope>
</reference>
<dbReference type="EMBL" id="AF364175">
    <property type="protein sequence ID" value="AAP78921.1"/>
    <property type="molecule type" value="Genomic_DNA"/>
</dbReference>
<dbReference type="RefSeq" id="NP_861407.1">
    <property type="nucleotide sequence ID" value="NC_004324.3"/>
</dbReference>
<dbReference type="SMR" id="Q7TD11"/>
<dbReference type="KEGG" id="vg:1732961"/>
<dbReference type="Proteomes" id="UP000007763">
    <property type="component" value="Genome"/>
</dbReference>
<keyword id="KW-1185">Reference proteome</keyword>
<organism>
    <name type="scientific">Cestrum yellow leaf curling virus</name>
    <name type="common">CmYLCV</name>
    <dbReference type="NCBI Taxonomy" id="175814"/>
    <lineage>
        <taxon>Viruses</taxon>
        <taxon>Riboviria</taxon>
        <taxon>Pararnavirae</taxon>
        <taxon>Artverviricota</taxon>
        <taxon>Revtraviricetes</taxon>
        <taxon>Ortervirales</taxon>
        <taxon>Caulimoviridae</taxon>
        <taxon>Soymovirus</taxon>
        <taxon>Soymovirus crispocestri</taxon>
    </lineage>
</organism>
<sequence length="201" mass="22907">MEKINKILEKVPIGVAQELKQELAEWIPPIANKEDLPEQTLSQYEFSHGTQPAIPWKGKCFTIPKNLKGESSYLMGTGRAMPTQNMSANLFSISCVLNNITEILTYISQKRIGSLSASLNKELKDLENRTISNLEINRTDIKSDLEKQISLNKENLKGLEIATERLERLFLESRKEQISKDEIANLTQKVKEMQTFLNDKL</sequence>
<gene>
    <name type="ORF">ORF II</name>
</gene>
<feature type="chain" id="PRO_0000317784" description="Uncharacterized protein 2">
    <location>
        <begin position="1"/>
        <end position="201"/>
    </location>
</feature>
<name>Y2_CYLCV</name>
<proteinExistence type="predicted"/>
<organismHost>
    <name type="scientific">Cestrum parqui</name>
    <dbReference type="NCBI Taxonomy" id="142762"/>
</organismHost>
<accession>Q7TD11</accession>